<reference key="1">
    <citation type="submission" date="2004-11" db="EMBL/GenBank/DDBJ databases">
        <authorList>
            <consortium name="The German cDNA consortium"/>
        </authorList>
    </citation>
    <scope>NUCLEOTIDE SEQUENCE [LARGE SCALE MRNA]</scope>
    <source>
        <tissue>Kidney</tissue>
    </source>
</reference>
<protein>
    <recommendedName>
        <fullName>Transcriptional adapter 2-beta</fullName>
    </recommendedName>
</protein>
<feature type="chain" id="PRO_0000313712" description="Transcriptional adapter 2-beta">
    <location>
        <begin position="1"/>
        <end position="420"/>
    </location>
</feature>
<feature type="domain" description="SANT" evidence="3">
    <location>
        <begin position="65"/>
        <end position="118"/>
    </location>
</feature>
<feature type="zinc finger region" description="ZZ-type" evidence="2">
    <location>
        <begin position="4"/>
        <end position="59"/>
    </location>
</feature>
<feature type="region of interest" description="Disordered" evidence="4">
    <location>
        <begin position="305"/>
        <end position="335"/>
    </location>
</feature>
<feature type="binding site" evidence="2">
    <location>
        <position position="9"/>
    </location>
    <ligand>
        <name>Zn(2+)</name>
        <dbReference type="ChEBI" id="CHEBI:29105"/>
        <label>1</label>
    </ligand>
</feature>
<feature type="binding site" evidence="2">
    <location>
        <position position="12"/>
    </location>
    <ligand>
        <name>Zn(2+)</name>
        <dbReference type="ChEBI" id="CHEBI:29105"/>
        <label>1</label>
    </ligand>
</feature>
<feature type="binding site" evidence="2">
    <location>
        <position position="23"/>
    </location>
    <ligand>
        <name>Zn(2+)</name>
        <dbReference type="ChEBI" id="CHEBI:29105"/>
        <label>2</label>
    </ligand>
</feature>
<feature type="binding site" evidence="2">
    <location>
        <position position="26"/>
    </location>
    <ligand>
        <name>Zn(2+)</name>
        <dbReference type="ChEBI" id="CHEBI:29105"/>
        <label>2</label>
    </ligand>
</feature>
<feature type="binding site" evidence="2">
    <location>
        <position position="32"/>
    </location>
    <ligand>
        <name>Zn(2+)</name>
        <dbReference type="ChEBI" id="CHEBI:29105"/>
        <label>1</label>
    </ligand>
</feature>
<feature type="binding site" evidence="2">
    <location>
        <position position="35"/>
    </location>
    <ligand>
        <name>Zn(2+)</name>
        <dbReference type="ChEBI" id="CHEBI:29105"/>
        <label>1</label>
    </ligand>
</feature>
<feature type="binding site" evidence="2">
    <location>
        <position position="45"/>
    </location>
    <ligand>
        <name>Zn(2+)</name>
        <dbReference type="ChEBI" id="CHEBI:29105"/>
        <label>2</label>
    </ligand>
</feature>
<feature type="binding site" evidence="2">
    <location>
        <position position="49"/>
    </location>
    <ligand>
        <name>Zn(2+)</name>
        <dbReference type="ChEBI" id="CHEBI:29105"/>
        <label>2</label>
    </ligand>
</feature>
<organism>
    <name type="scientific">Pongo abelii</name>
    <name type="common">Sumatran orangutan</name>
    <name type="synonym">Pongo pygmaeus abelii</name>
    <dbReference type="NCBI Taxonomy" id="9601"/>
    <lineage>
        <taxon>Eukaryota</taxon>
        <taxon>Metazoa</taxon>
        <taxon>Chordata</taxon>
        <taxon>Craniata</taxon>
        <taxon>Vertebrata</taxon>
        <taxon>Euteleostomi</taxon>
        <taxon>Mammalia</taxon>
        <taxon>Eutheria</taxon>
        <taxon>Euarchontoglires</taxon>
        <taxon>Primates</taxon>
        <taxon>Haplorrhini</taxon>
        <taxon>Catarrhini</taxon>
        <taxon>Hominidae</taxon>
        <taxon>Pongo</taxon>
    </lineage>
</organism>
<gene>
    <name type="primary">TADA2B</name>
</gene>
<proteinExistence type="evidence at transcript level"/>
<accession>Q5RBN9</accession>
<dbReference type="EMBL" id="CR858599">
    <property type="protein sequence ID" value="CAH90821.1"/>
    <property type="molecule type" value="mRNA"/>
</dbReference>
<dbReference type="RefSeq" id="NP_001153252.1">
    <property type="nucleotide sequence ID" value="NM_001159780.1"/>
</dbReference>
<dbReference type="SMR" id="Q5RBN9"/>
<dbReference type="FunCoup" id="Q5RBN9">
    <property type="interactions" value="1384"/>
</dbReference>
<dbReference type="STRING" id="9601.ENSPPYP00000016284"/>
<dbReference type="GeneID" id="100190856"/>
<dbReference type="KEGG" id="pon:100190856"/>
<dbReference type="CTD" id="93624"/>
<dbReference type="eggNOG" id="KOG0457">
    <property type="taxonomic scope" value="Eukaryota"/>
</dbReference>
<dbReference type="InParanoid" id="Q5RBN9"/>
<dbReference type="OrthoDB" id="270417at2759"/>
<dbReference type="Proteomes" id="UP000001595">
    <property type="component" value="Unplaced"/>
</dbReference>
<dbReference type="GO" id="GO:0005634">
    <property type="term" value="C:nucleus"/>
    <property type="evidence" value="ECO:0007669"/>
    <property type="project" value="UniProtKB-SubCell"/>
</dbReference>
<dbReference type="GO" id="GO:0070461">
    <property type="term" value="C:SAGA-type complex"/>
    <property type="evidence" value="ECO:0007669"/>
    <property type="project" value="UniProtKB-ARBA"/>
</dbReference>
<dbReference type="GO" id="GO:0003682">
    <property type="term" value="F:chromatin binding"/>
    <property type="evidence" value="ECO:0007669"/>
    <property type="project" value="TreeGrafter"/>
</dbReference>
<dbReference type="GO" id="GO:0003713">
    <property type="term" value="F:transcription coactivator activity"/>
    <property type="evidence" value="ECO:0007669"/>
    <property type="project" value="InterPro"/>
</dbReference>
<dbReference type="GO" id="GO:0008270">
    <property type="term" value="F:zinc ion binding"/>
    <property type="evidence" value="ECO:0007669"/>
    <property type="project" value="UniProtKB-KW"/>
</dbReference>
<dbReference type="GO" id="GO:0006338">
    <property type="term" value="P:chromatin remodeling"/>
    <property type="evidence" value="ECO:0007669"/>
    <property type="project" value="TreeGrafter"/>
</dbReference>
<dbReference type="GO" id="GO:0006357">
    <property type="term" value="P:regulation of transcription by RNA polymerase II"/>
    <property type="evidence" value="ECO:0007669"/>
    <property type="project" value="InterPro"/>
</dbReference>
<dbReference type="CDD" id="cd00167">
    <property type="entry name" value="SANT"/>
    <property type="match status" value="1"/>
</dbReference>
<dbReference type="CDD" id="cd02335">
    <property type="entry name" value="ZZ_ADA2"/>
    <property type="match status" value="1"/>
</dbReference>
<dbReference type="FunFam" id="1.10.10.10:FF:000185">
    <property type="entry name" value="Transcriptional adapter"/>
    <property type="match status" value="1"/>
</dbReference>
<dbReference type="FunFam" id="1.10.10.60:FF:000170">
    <property type="entry name" value="Transcriptional adapter"/>
    <property type="match status" value="1"/>
</dbReference>
<dbReference type="FunFam" id="3.30.60.90:FF:000011">
    <property type="entry name" value="Transcriptional adapter"/>
    <property type="match status" value="1"/>
</dbReference>
<dbReference type="Gene3D" id="3.30.60.90">
    <property type="match status" value="1"/>
</dbReference>
<dbReference type="Gene3D" id="1.10.10.60">
    <property type="entry name" value="Homeodomain-like"/>
    <property type="match status" value="1"/>
</dbReference>
<dbReference type="Gene3D" id="1.10.10.10">
    <property type="entry name" value="Winged helix-like DNA-binding domain superfamily/Winged helix DNA-binding domain"/>
    <property type="match status" value="1"/>
</dbReference>
<dbReference type="InterPro" id="IPR041983">
    <property type="entry name" value="ADA2-like_ZZ"/>
</dbReference>
<dbReference type="InterPro" id="IPR016827">
    <property type="entry name" value="Ada2/TADA2"/>
</dbReference>
<dbReference type="InterPro" id="IPR056267">
    <property type="entry name" value="Ada2b_C"/>
</dbReference>
<dbReference type="InterPro" id="IPR009057">
    <property type="entry name" value="Homeodomain-like_sf"/>
</dbReference>
<dbReference type="InterPro" id="IPR001005">
    <property type="entry name" value="SANT/Myb"/>
</dbReference>
<dbReference type="InterPro" id="IPR017884">
    <property type="entry name" value="SANT_dom"/>
</dbReference>
<dbReference type="InterPro" id="IPR055141">
    <property type="entry name" value="TADA2A_B-like_dom"/>
</dbReference>
<dbReference type="InterPro" id="IPR036388">
    <property type="entry name" value="WH-like_DNA-bd_sf"/>
</dbReference>
<dbReference type="InterPro" id="IPR000433">
    <property type="entry name" value="Znf_ZZ"/>
</dbReference>
<dbReference type="InterPro" id="IPR043145">
    <property type="entry name" value="Znf_ZZ_sf"/>
</dbReference>
<dbReference type="PANTHER" id="PTHR12374:SF63">
    <property type="entry name" value="TRANSCRIPTIONAL ADAPTER 2-BETA"/>
    <property type="match status" value="1"/>
</dbReference>
<dbReference type="PANTHER" id="PTHR12374">
    <property type="entry name" value="TRANSCRIPTIONAL ADAPTOR 2 ADA2 -RELATED"/>
    <property type="match status" value="1"/>
</dbReference>
<dbReference type="Pfam" id="PF00249">
    <property type="entry name" value="Myb_DNA-binding"/>
    <property type="match status" value="1"/>
</dbReference>
<dbReference type="Pfam" id="PF22941">
    <property type="entry name" value="TADA2A-like_3rd"/>
    <property type="match status" value="1"/>
</dbReference>
<dbReference type="Pfam" id="PF24533">
    <property type="entry name" value="Tri-helical_Ada2b_C"/>
    <property type="match status" value="1"/>
</dbReference>
<dbReference type="Pfam" id="PF25299">
    <property type="entry name" value="ZZ_ADA2"/>
    <property type="match status" value="1"/>
</dbReference>
<dbReference type="PIRSF" id="PIRSF025024">
    <property type="entry name" value="Transcriptional_adaptor_2"/>
    <property type="match status" value="1"/>
</dbReference>
<dbReference type="SMART" id="SM00717">
    <property type="entry name" value="SANT"/>
    <property type="match status" value="1"/>
</dbReference>
<dbReference type="SMART" id="SM00291">
    <property type="entry name" value="ZnF_ZZ"/>
    <property type="match status" value="1"/>
</dbReference>
<dbReference type="SUPFAM" id="SSF46689">
    <property type="entry name" value="Homeodomain-like"/>
    <property type="match status" value="2"/>
</dbReference>
<dbReference type="SUPFAM" id="SSF57850">
    <property type="entry name" value="RING/U-box"/>
    <property type="match status" value="1"/>
</dbReference>
<dbReference type="PROSITE" id="PS51293">
    <property type="entry name" value="SANT"/>
    <property type="match status" value="1"/>
</dbReference>
<dbReference type="PROSITE" id="PS01357">
    <property type="entry name" value="ZF_ZZ_1"/>
    <property type="match status" value="1"/>
</dbReference>
<dbReference type="PROSITE" id="PS50135">
    <property type="entry name" value="ZF_ZZ_2"/>
    <property type="match status" value="1"/>
</dbReference>
<evidence type="ECO:0000250" key="1"/>
<evidence type="ECO:0000255" key="2">
    <source>
        <dbReference type="PROSITE-ProRule" id="PRU00228"/>
    </source>
</evidence>
<evidence type="ECO:0000255" key="3">
    <source>
        <dbReference type="PROSITE-ProRule" id="PRU00624"/>
    </source>
</evidence>
<evidence type="ECO:0000256" key="4">
    <source>
        <dbReference type="SAM" id="MobiDB-lite"/>
    </source>
</evidence>
<evidence type="ECO:0000305" key="5"/>
<sequence length="420" mass="48470">MAELGKKYCVYCLAEVSPLRFRCTECQDIELCPECFSAGAEIGHHRRYHGYQLVDGGRFTLWGPEAEGGWTSREEQLLLDAIEQFGFGNWEDMAAHVGASRTPQEVMEHYVSMYIHGNLGKACIPDTIPNRVTDHTCPSGGPLSPSLTTPLPPLDISVAEQQQLGYMPLRDDYEIEYDQDAETLISGLSVNYDDDDVEIELKRAHVDMYVRKLKERQRRKNIARDYNLVPAFLGKDKKEKEKALKRKITKEEKELRLKLRPLYQFMSCKEFDDLFENMHKEKMLRAKIRELQRYRRNGITKMEESAEYEAARHKREKRKENKNLAGSKRGKEDGKDSEFAAIENLPGFELLSDREKVLCSSLNLSPARYVTVKTIIIKDHLQKRQGIPSKSRLPSYLDKVLKKRILNFLTESGWISRDAS</sequence>
<comment type="function">
    <text evidence="1">Coactivates PAX5-dependent transcription together with either SMARCA4 or GCN5L2.</text>
</comment>
<comment type="subunit">
    <text evidence="1">Interacts with GCN5L2, SMARCA4, SMARCE1 and PAX5. Component of the TFTC-HAT complex (By similarity).</text>
</comment>
<comment type="subcellular location">
    <subcellularLocation>
        <location evidence="5">Nucleus</location>
    </subcellularLocation>
</comment>
<keyword id="KW-0479">Metal-binding</keyword>
<keyword id="KW-0539">Nucleus</keyword>
<keyword id="KW-1185">Reference proteome</keyword>
<keyword id="KW-0804">Transcription</keyword>
<keyword id="KW-0805">Transcription regulation</keyword>
<keyword id="KW-0862">Zinc</keyword>
<keyword id="KW-0863">Zinc-finger</keyword>
<name>TAD2B_PONAB</name>